<proteinExistence type="inferred from homology"/>
<feature type="chain" id="PRO_1000212039" description="Glyceraldehyde-3-phosphate dehydrogenase">
    <location>
        <begin position="1"/>
        <end position="340"/>
    </location>
</feature>
<feature type="active site" description="Nucleophile" evidence="1">
    <location>
        <position position="139"/>
    </location>
</feature>
<feature type="binding site" evidence="1">
    <location>
        <begin position="11"/>
        <end position="12"/>
    </location>
    <ligand>
        <name>NAD(+)</name>
        <dbReference type="ChEBI" id="CHEBI:57540"/>
    </ligand>
</feature>
<feature type="binding site" evidence="1">
    <location>
        <position position="109"/>
    </location>
    <ligand>
        <name>NAD(+)</name>
        <dbReference type="ChEBI" id="CHEBI:57540"/>
    </ligand>
</feature>
<feature type="binding site" evidence="1">
    <location>
        <begin position="138"/>
        <end position="140"/>
    </location>
    <ligand>
        <name>D-glyceraldehyde 3-phosphate</name>
        <dbReference type="ChEBI" id="CHEBI:59776"/>
    </ligand>
</feature>
<feature type="binding site" evidence="1">
    <location>
        <position position="167"/>
    </location>
    <ligand>
        <name>NAD(+)</name>
        <dbReference type="ChEBI" id="CHEBI:57540"/>
    </ligand>
</feature>
<feature type="binding site" evidence="1">
    <location>
        <begin position="193"/>
        <end position="194"/>
    </location>
    <ligand>
        <name>D-glyceraldehyde 3-phosphate</name>
        <dbReference type="ChEBI" id="CHEBI:59776"/>
    </ligand>
</feature>
<feature type="binding site" evidence="1">
    <location>
        <position position="300"/>
    </location>
    <ligand>
        <name>NAD(+)</name>
        <dbReference type="ChEBI" id="CHEBI:57540"/>
    </ligand>
</feature>
<organism>
    <name type="scientific">Saccharolobus islandicus (strain Y.N.15.51 / Yellowstone #2)</name>
    <name type="common">Sulfolobus islandicus</name>
    <dbReference type="NCBI Taxonomy" id="419942"/>
    <lineage>
        <taxon>Archaea</taxon>
        <taxon>Thermoproteota</taxon>
        <taxon>Thermoprotei</taxon>
        <taxon>Sulfolobales</taxon>
        <taxon>Sulfolobaceae</taxon>
        <taxon>Saccharolobus</taxon>
    </lineage>
</organism>
<accession>C3NGT6</accession>
<keyword id="KW-0963">Cytoplasm</keyword>
<keyword id="KW-0324">Glycolysis</keyword>
<keyword id="KW-0520">NAD</keyword>
<keyword id="KW-0521">NADP</keyword>
<keyword id="KW-0560">Oxidoreductase</keyword>
<evidence type="ECO:0000255" key="1">
    <source>
        <dbReference type="HAMAP-Rule" id="MF_00559"/>
    </source>
</evidence>
<name>G3P_SACI1</name>
<dbReference type="EC" id="1.2.1.59" evidence="1"/>
<dbReference type="EMBL" id="CP001404">
    <property type="protein sequence ID" value="ACP48346.1"/>
    <property type="molecule type" value="Genomic_DNA"/>
</dbReference>
<dbReference type="RefSeq" id="WP_012716227.1">
    <property type="nucleotide sequence ID" value="NC_012623.1"/>
</dbReference>
<dbReference type="SMR" id="C3NGT6"/>
<dbReference type="KEGG" id="sin:YN1551_1251"/>
<dbReference type="HOGENOM" id="CLU_069533_0_0_2"/>
<dbReference type="UniPathway" id="UPA00109">
    <property type="reaction ID" value="UER00184"/>
</dbReference>
<dbReference type="Proteomes" id="UP000006818">
    <property type="component" value="Chromosome"/>
</dbReference>
<dbReference type="GO" id="GO:0005737">
    <property type="term" value="C:cytoplasm"/>
    <property type="evidence" value="ECO:0007669"/>
    <property type="project" value="UniProtKB-SubCell"/>
</dbReference>
<dbReference type="GO" id="GO:0008839">
    <property type="term" value="F:4-hydroxy-tetrahydrodipicolinate reductase"/>
    <property type="evidence" value="ECO:0007669"/>
    <property type="project" value="InterPro"/>
</dbReference>
<dbReference type="GO" id="GO:0004365">
    <property type="term" value="F:glyceraldehyde-3-phosphate dehydrogenase (NAD+) (phosphorylating) activity"/>
    <property type="evidence" value="ECO:0007669"/>
    <property type="project" value="UniProtKB-UniRule"/>
</dbReference>
<dbReference type="GO" id="GO:0047100">
    <property type="term" value="F:glyceraldehyde-3-phosphate dehydrogenase (NADP+) (phosphorylating) activity"/>
    <property type="evidence" value="ECO:0007669"/>
    <property type="project" value="RHEA"/>
</dbReference>
<dbReference type="GO" id="GO:0051287">
    <property type="term" value="F:NAD binding"/>
    <property type="evidence" value="ECO:0007669"/>
    <property type="project" value="InterPro"/>
</dbReference>
<dbReference type="GO" id="GO:0050661">
    <property type="term" value="F:NADP binding"/>
    <property type="evidence" value="ECO:0007669"/>
    <property type="project" value="InterPro"/>
</dbReference>
<dbReference type="GO" id="GO:0006096">
    <property type="term" value="P:glycolytic process"/>
    <property type="evidence" value="ECO:0007669"/>
    <property type="project" value="UniProtKB-UniRule"/>
</dbReference>
<dbReference type="GO" id="GO:0009089">
    <property type="term" value="P:lysine biosynthetic process via diaminopimelate"/>
    <property type="evidence" value="ECO:0007669"/>
    <property type="project" value="InterPro"/>
</dbReference>
<dbReference type="CDD" id="cd18127">
    <property type="entry name" value="GAPDH_II_C"/>
    <property type="match status" value="1"/>
</dbReference>
<dbReference type="CDD" id="cd02278">
    <property type="entry name" value="GAPDH_II_N"/>
    <property type="match status" value="1"/>
</dbReference>
<dbReference type="Gene3D" id="3.30.360.10">
    <property type="entry name" value="Dihydrodipicolinate Reductase, domain 2"/>
    <property type="match status" value="1"/>
</dbReference>
<dbReference type="Gene3D" id="3.40.50.720">
    <property type="entry name" value="NAD(P)-binding Rossmann-like Domain"/>
    <property type="match status" value="1"/>
</dbReference>
<dbReference type="HAMAP" id="MF_00559">
    <property type="entry name" value="G3P_dehdrog_arch"/>
    <property type="match status" value="1"/>
</dbReference>
<dbReference type="InterPro" id="IPR000846">
    <property type="entry name" value="DapB_N"/>
</dbReference>
<dbReference type="InterPro" id="IPR020831">
    <property type="entry name" value="GlycerAld/Erythrose_P_DH"/>
</dbReference>
<dbReference type="InterPro" id="IPR020830">
    <property type="entry name" value="GlycerAld_3-P_DH_AS"/>
</dbReference>
<dbReference type="InterPro" id="IPR020829">
    <property type="entry name" value="GlycerAld_3-P_DH_cat"/>
</dbReference>
<dbReference type="InterPro" id="IPR020828">
    <property type="entry name" value="GlycerAld_3-P_DH_NAD(P)-bd"/>
</dbReference>
<dbReference type="InterPro" id="IPR006436">
    <property type="entry name" value="Glyceraldehyde-3-P_DH_2_arc"/>
</dbReference>
<dbReference type="InterPro" id="IPR036291">
    <property type="entry name" value="NAD(P)-bd_dom_sf"/>
</dbReference>
<dbReference type="NCBIfam" id="TIGR01546">
    <property type="entry name" value="GAPDH-II_archae"/>
    <property type="match status" value="1"/>
</dbReference>
<dbReference type="NCBIfam" id="NF003251">
    <property type="entry name" value="PRK04207.1"/>
    <property type="match status" value="1"/>
</dbReference>
<dbReference type="Pfam" id="PF01113">
    <property type="entry name" value="DapB_N"/>
    <property type="match status" value="1"/>
</dbReference>
<dbReference type="Pfam" id="PF02800">
    <property type="entry name" value="Gp_dh_C"/>
    <property type="match status" value="1"/>
</dbReference>
<dbReference type="PIRSF" id="PIRSF000149">
    <property type="entry name" value="GAP_DH"/>
    <property type="match status" value="1"/>
</dbReference>
<dbReference type="SMART" id="SM00846">
    <property type="entry name" value="Gp_dh_N"/>
    <property type="match status" value="1"/>
</dbReference>
<dbReference type="SUPFAM" id="SSF55347">
    <property type="entry name" value="Glyceraldehyde-3-phosphate dehydrogenase-like, C-terminal domain"/>
    <property type="match status" value="1"/>
</dbReference>
<dbReference type="SUPFAM" id="SSF51735">
    <property type="entry name" value="NAD(P)-binding Rossmann-fold domains"/>
    <property type="match status" value="1"/>
</dbReference>
<dbReference type="PROSITE" id="PS00071">
    <property type="entry name" value="GAPDH"/>
    <property type="match status" value="1"/>
</dbReference>
<comment type="catalytic activity">
    <reaction evidence="1">
        <text>D-glyceraldehyde 3-phosphate + phosphate + NADP(+) = (2R)-3-phospho-glyceroyl phosphate + NADPH + H(+)</text>
        <dbReference type="Rhea" id="RHEA:10296"/>
        <dbReference type="ChEBI" id="CHEBI:15378"/>
        <dbReference type="ChEBI" id="CHEBI:43474"/>
        <dbReference type="ChEBI" id="CHEBI:57604"/>
        <dbReference type="ChEBI" id="CHEBI:57783"/>
        <dbReference type="ChEBI" id="CHEBI:58349"/>
        <dbReference type="ChEBI" id="CHEBI:59776"/>
        <dbReference type="EC" id="1.2.1.59"/>
    </reaction>
</comment>
<comment type="catalytic activity">
    <reaction evidence="1">
        <text>D-glyceraldehyde 3-phosphate + phosphate + NAD(+) = (2R)-3-phospho-glyceroyl phosphate + NADH + H(+)</text>
        <dbReference type="Rhea" id="RHEA:10300"/>
        <dbReference type="ChEBI" id="CHEBI:15378"/>
        <dbReference type="ChEBI" id="CHEBI:43474"/>
        <dbReference type="ChEBI" id="CHEBI:57540"/>
        <dbReference type="ChEBI" id="CHEBI:57604"/>
        <dbReference type="ChEBI" id="CHEBI:57945"/>
        <dbReference type="ChEBI" id="CHEBI:59776"/>
        <dbReference type="EC" id="1.2.1.59"/>
    </reaction>
</comment>
<comment type="pathway">
    <text evidence="1">Carbohydrate degradation; glycolysis; pyruvate from D-glyceraldehyde 3-phosphate: step 1/5.</text>
</comment>
<comment type="subunit">
    <text evidence="1">Homotetramer.</text>
</comment>
<comment type="subcellular location">
    <subcellularLocation>
        <location evidence="1">Cytoplasm</location>
    </subcellularLocation>
</comment>
<comment type="similarity">
    <text evidence="1">Belongs to the glyceraldehyde-3-phosphate dehydrogenase family.</text>
</comment>
<gene>
    <name evidence="1" type="primary">gap</name>
    <name type="ordered locus">YN1551_1251</name>
</gene>
<reference key="1">
    <citation type="journal article" date="2009" name="Proc. Natl. Acad. Sci. U.S.A.">
        <title>Biogeography of the Sulfolobus islandicus pan-genome.</title>
        <authorList>
            <person name="Reno M.L."/>
            <person name="Held N.L."/>
            <person name="Fields C.J."/>
            <person name="Burke P.V."/>
            <person name="Whitaker R.J."/>
        </authorList>
    </citation>
    <scope>NUCLEOTIDE SEQUENCE [LARGE SCALE GENOMIC DNA]</scope>
    <source>
        <strain>Y.N.15.51 / Yellowstone #2</strain>
    </source>
</reference>
<protein>
    <recommendedName>
        <fullName evidence="1">Glyceraldehyde-3-phosphate dehydrogenase</fullName>
        <shortName evidence="1">GAPDH</shortName>
        <ecNumber evidence="1">1.2.1.59</ecNumber>
    </recommendedName>
    <alternativeName>
        <fullName evidence="1">NAD(P)-dependent glyceraldehyde-3-phosphate dehydrogenase</fullName>
    </alternativeName>
</protein>
<sequence length="340" mass="37554">MISVAVNGYGTIGKRVADAILKQPDMRLVGVAKTSPNYEAFIAHRKGIKIYVPQQSIKKFEESGIPVAGTIEDLVKASDIVVDTTPNGVGAQYKPIYQQFQRNAIFQGGEKAEVADISFSALCNYDEALGKKYIRVVSCNTTALLRTICTINKVTKVEKVRATIVRRAADQKEVKKGPINSLVPDPATVPSHHAKDVNSVIKNLDIVTMAVIAPTTLMHMHFINITLKDKVEKKDVLSVLENTPRIVLISSKYDAEATAELVEVARDLKRERNDIPEVMVFDDSVYVKDNEVMLMYAVHQESIVVPENVDAIRASTRLMSAEDSIRITNESLGILKGYLI</sequence>